<organism>
    <name type="scientific">Pan troglodytes</name>
    <name type="common">Chimpanzee</name>
    <dbReference type="NCBI Taxonomy" id="9598"/>
    <lineage>
        <taxon>Eukaryota</taxon>
        <taxon>Metazoa</taxon>
        <taxon>Chordata</taxon>
        <taxon>Craniata</taxon>
        <taxon>Vertebrata</taxon>
        <taxon>Euteleostomi</taxon>
        <taxon>Mammalia</taxon>
        <taxon>Eutheria</taxon>
        <taxon>Euarchontoglires</taxon>
        <taxon>Primates</taxon>
        <taxon>Haplorrhini</taxon>
        <taxon>Catarrhini</taxon>
        <taxon>Hominidae</taxon>
        <taxon>Pan</taxon>
    </lineage>
</organism>
<evidence type="ECO:0000256" key="1">
    <source>
        <dbReference type="SAM" id="MobiDB-lite"/>
    </source>
</evidence>
<evidence type="ECO:0000305" key="2"/>
<feature type="chain" id="PRO_0000158271" description="Pro-MCH variant">
    <location>
        <begin position="1" status="less than"/>
        <end position="62" status="greater than"/>
    </location>
</feature>
<feature type="region of interest" description="NGE-like">
    <location>
        <begin position="23"/>
        <end position="41"/>
    </location>
</feature>
<feature type="region of interest" description="Disordered" evidence="1">
    <location>
        <begin position="29"/>
        <end position="62"/>
    </location>
</feature>
<feature type="region of interest" description="NEI-like">
    <location>
        <begin position="44"/>
        <end position="56"/>
    </location>
</feature>
<feature type="region of interest" description="Melanin-concentrating hormone-like">
    <location>
        <begin position="60"/>
        <end position="62" status="greater than"/>
    </location>
</feature>
<feature type="non-terminal residue">
    <location>
        <position position="1"/>
    </location>
</feature>
<feature type="non-terminal residue">
    <location>
        <position position="62"/>
    </location>
</feature>
<protein>
    <recommendedName>
        <fullName>Pro-MCH variant</fullName>
    </recommendedName>
</protein>
<sequence>KHNFLNHGLSLNLVIKPYLALEGSVAFPAENGVQDTESTQEKRETGDEENSAKFPIGRRDFD</sequence>
<name>MCHL1_PANTR</name>
<keyword id="KW-1185">Reference proteome</keyword>
<proteinExistence type="inferred from homology"/>
<dbReference type="EMBL" id="AF029401">
    <property type="protein sequence ID" value="AAC05254.1"/>
    <property type="molecule type" value="Genomic_DNA"/>
</dbReference>
<dbReference type="STRING" id="9598.ENSPTRP00000087079"/>
<dbReference type="InParanoid" id="O62693"/>
<dbReference type="Proteomes" id="UP000002277">
    <property type="component" value="Unplaced"/>
</dbReference>
<dbReference type="GO" id="GO:0045202">
    <property type="term" value="C:synapse"/>
    <property type="evidence" value="ECO:0007669"/>
    <property type="project" value="GOC"/>
</dbReference>
<dbReference type="GO" id="GO:0030354">
    <property type="term" value="F:melanin-concentrating hormone activity"/>
    <property type="evidence" value="ECO:0007669"/>
    <property type="project" value="InterPro"/>
</dbReference>
<dbReference type="GO" id="GO:0007268">
    <property type="term" value="P:chemical synaptic transmission"/>
    <property type="evidence" value="ECO:0007669"/>
    <property type="project" value="InterPro"/>
</dbReference>
<dbReference type="InterPro" id="IPR005456">
    <property type="entry name" value="Prepro-melanin_conc_hormone"/>
</dbReference>
<dbReference type="PANTHER" id="PTHR12091">
    <property type="entry name" value="MELANIN-CONCENTRATING HORMONE"/>
    <property type="match status" value="1"/>
</dbReference>
<dbReference type="PANTHER" id="PTHR12091:SF1">
    <property type="entry name" value="PRO-MCH-LIKE PROTEIN 1-RELATED"/>
    <property type="match status" value="1"/>
</dbReference>
<dbReference type="Pfam" id="PF05824">
    <property type="entry name" value="Pro-MCH"/>
    <property type="match status" value="1"/>
</dbReference>
<dbReference type="PRINTS" id="PR01641">
    <property type="entry name" value="PROMCHFAMILY"/>
</dbReference>
<reference key="1">
    <citation type="journal article" date="1998" name="Mol. Biol. Evol.">
        <title>Emergence of a brain-expressed variant melanin-concentrating hormone gene during higher primate evolution: a gene 'in search of a function'.</title>
        <authorList>
            <person name="Viale A."/>
            <person name="Ortola C."/>
            <person name="Richard F."/>
            <person name="Vernier P."/>
            <person name="Presse F."/>
            <person name="Schilling S."/>
            <person name="Dutrillaux B."/>
            <person name="Nahon J.-L."/>
        </authorList>
    </citation>
    <scope>NUCLEOTIDE SEQUENCE [GENOMIC DNA]</scope>
</reference>
<accession>O62693</accession>
<comment type="similarity">
    <text evidence="2">Belongs to the melanin-concentrating hormone family.</text>
</comment>
<comment type="caution">
    <text evidence="2">PMCHL1 mRNA may not be used as template for translation. In human only antisense PMCHL1 transcripts are present in brain.</text>
</comment>
<gene>
    <name type="primary">PMCHL1</name>
</gene>